<evidence type="ECO:0000255" key="1">
    <source>
        <dbReference type="HAMAP-Rule" id="MF_00340"/>
    </source>
</evidence>
<evidence type="ECO:0000305" key="2"/>
<dbReference type="EMBL" id="CP000576">
    <property type="protein sequence ID" value="ABO17638.1"/>
    <property type="molecule type" value="Genomic_DNA"/>
</dbReference>
<dbReference type="RefSeq" id="WP_002805281.1">
    <property type="nucleotide sequence ID" value="NC_009091.1"/>
</dbReference>
<dbReference type="SMR" id="A3PD13"/>
<dbReference type="STRING" id="167546.P9301_10151"/>
<dbReference type="KEGG" id="pmg:P9301_10151"/>
<dbReference type="eggNOG" id="COG0333">
    <property type="taxonomic scope" value="Bacteria"/>
</dbReference>
<dbReference type="HOGENOM" id="CLU_199882_0_0_3"/>
<dbReference type="Proteomes" id="UP000001430">
    <property type="component" value="Chromosome"/>
</dbReference>
<dbReference type="GO" id="GO:0015934">
    <property type="term" value="C:large ribosomal subunit"/>
    <property type="evidence" value="ECO:0007669"/>
    <property type="project" value="InterPro"/>
</dbReference>
<dbReference type="GO" id="GO:0003735">
    <property type="term" value="F:structural constituent of ribosome"/>
    <property type="evidence" value="ECO:0007669"/>
    <property type="project" value="InterPro"/>
</dbReference>
<dbReference type="GO" id="GO:0006412">
    <property type="term" value="P:translation"/>
    <property type="evidence" value="ECO:0007669"/>
    <property type="project" value="UniProtKB-UniRule"/>
</dbReference>
<dbReference type="HAMAP" id="MF_00340">
    <property type="entry name" value="Ribosomal_bL32"/>
    <property type="match status" value="1"/>
</dbReference>
<dbReference type="InterPro" id="IPR002677">
    <property type="entry name" value="Ribosomal_bL32"/>
</dbReference>
<dbReference type="InterPro" id="IPR044958">
    <property type="entry name" value="Ribosomal_bL32_plant/cyanobact"/>
</dbReference>
<dbReference type="InterPro" id="IPR011332">
    <property type="entry name" value="Ribosomal_zn-bd"/>
</dbReference>
<dbReference type="NCBIfam" id="TIGR01031">
    <property type="entry name" value="rpmF_bact"/>
    <property type="match status" value="1"/>
</dbReference>
<dbReference type="PANTHER" id="PTHR36083">
    <property type="entry name" value="50S RIBOSOMAL PROTEIN L32, CHLOROPLASTIC"/>
    <property type="match status" value="1"/>
</dbReference>
<dbReference type="PANTHER" id="PTHR36083:SF1">
    <property type="entry name" value="LARGE RIBOSOMAL SUBUNIT PROTEIN BL32C"/>
    <property type="match status" value="1"/>
</dbReference>
<dbReference type="Pfam" id="PF01783">
    <property type="entry name" value="Ribosomal_L32p"/>
    <property type="match status" value="1"/>
</dbReference>
<dbReference type="SUPFAM" id="SSF57829">
    <property type="entry name" value="Zn-binding ribosomal proteins"/>
    <property type="match status" value="1"/>
</dbReference>
<name>RL32_PROM0</name>
<gene>
    <name evidence="1" type="primary">rpmF</name>
    <name evidence="1" type="synonym">rpl32</name>
    <name type="ordered locus">P9301_10151</name>
</gene>
<reference key="1">
    <citation type="journal article" date="2007" name="PLoS Genet.">
        <title>Patterns and implications of gene gain and loss in the evolution of Prochlorococcus.</title>
        <authorList>
            <person name="Kettler G.C."/>
            <person name="Martiny A.C."/>
            <person name="Huang K."/>
            <person name="Zucker J."/>
            <person name="Coleman M.L."/>
            <person name="Rodrigue S."/>
            <person name="Chen F."/>
            <person name="Lapidus A."/>
            <person name="Ferriera S."/>
            <person name="Johnson J."/>
            <person name="Steglich C."/>
            <person name="Church G.M."/>
            <person name="Richardson P."/>
            <person name="Chisholm S.W."/>
        </authorList>
    </citation>
    <scope>NUCLEOTIDE SEQUENCE [LARGE SCALE GENOMIC DNA]</scope>
    <source>
        <strain>MIT 9301</strain>
    </source>
</reference>
<feature type="chain" id="PRO_0000296527" description="Large ribosomal subunit protein bL32">
    <location>
        <begin position="1"/>
        <end position="56"/>
    </location>
</feature>
<protein>
    <recommendedName>
        <fullName evidence="1">Large ribosomal subunit protein bL32</fullName>
    </recommendedName>
    <alternativeName>
        <fullName evidence="2">50S ribosomal protein L32</fullName>
    </alternativeName>
</protein>
<organism>
    <name type="scientific">Prochlorococcus marinus (strain MIT 9301)</name>
    <dbReference type="NCBI Taxonomy" id="167546"/>
    <lineage>
        <taxon>Bacteria</taxon>
        <taxon>Bacillati</taxon>
        <taxon>Cyanobacteriota</taxon>
        <taxon>Cyanophyceae</taxon>
        <taxon>Synechococcales</taxon>
        <taxon>Prochlorococcaceae</taxon>
        <taxon>Prochlorococcus</taxon>
    </lineage>
</organism>
<accession>A3PD13</accession>
<comment type="similarity">
    <text evidence="1">Belongs to the bacterial ribosomal protein bL32 family.</text>
</comment>
<sequence length="56" mass="6181">MAVPKKKKSKSKRNQRHAVWKGKAAIAAQKAISLGKSVLTGKAQGFVYPIEEEEEE</sequence>
<keyword id="KW-1185">Reference proteome</keyword>
<keyword id="KW-0687">Ribonucleoprotein</keyword>
<keyword id="KW-0689">Ribosomal protein</keyword>
<proteinExistence type="inferred from homology"/>